<sequence>MNKLPHETRVVIGMSGGVDSSVAALLLKEQGYDVIGIFMKNWDDTDENGVCTATEDYNDVIEVCNQIGIPYYAVNFEKQYWDKVFTYFLDEYRAGRTPNPDVMCNKEIKFKAFLEHAIALGADYVATGHYARVAYMDGEYKMLRGVDDNKDQTYFLNQLSQEQLSKTMFPLGELKKPQIREMAKEAGLATAAKKDSTGICFIGERNFKDFLSNYLPAQPGVMQTLSGEVKGKHDGLMYYTIGQRHGLGIGGNGDPWFAVGKNLKENILYVDQGFHNELLYGDEVIATNVGWVSNKEKETEFKCTAKFRYRQEDNKVTVQIVDENTVRILCDEPIRAITPGQAVVFYDGDECLGGATIDEVYRSGKKLDYLG</sequence>
<proteinExistence type="inferred from homology"/>
<evidence type="ECO:0000255" key="1">
    <source>
        <dbReference type="HAMAP-Rule" id="MF_00144"/>
    </source>
</evidence>
<evidence type="ECO:0000305" key="2"/>
<keyword id="KW-0067">ATP-binding</keyword>
<keyword id="KW-0963">Cytoplasm</keyword>
<keyword id="KW-1015">Disulfide bond</keyword>
<keyword id="KW-0547">Nucleotide-binding</keyword>
<keyword id="KW-1185">Reference proteome</keyword>
<keyword id="KW-0694">RNA-binding</keyword>
<keyword id="KW-0808">Transferase</keyword>
<keyword id="KW-0819">tRNA processing</keyword>
<keyword id="KW-0820">tRNA-binding</keyword>
<comment type="function">
    <text evidence="1">Catalyzes the 2-thiolation of uridine at the wobble position (U34) of tRNA, leading to the formation of s(2)U34.</text>
</comment>
<comment type="catalytic activity">
    <reaction evidence="1">
        <text>S-sulfanyl-L-cysteinyl-[protein] + uridine(34) in tRNA + AH2 + ATP = 2-thiouridine(34) in tRNA + L-cysteinyl-[protein] + A + AMP + diphosphate + H(+)</text>
        <dbReference type="Rhea" id="RHEA:47032"/>
        <dbReference type="Rhea" id="RHEA-COMP:10131"/>
        <dbReference type="Rhea" id="RHEA-COMP:11726"/>
        <dbReference type="Rhea" id="RHEA-COMP:11727"/>
        <dbReference type="Rhea" id="RHEA-COMP:11728"/>
        <dbReference type="ChEBI" id="CHEBI:13193"/>
        <dbReference type="ChEBI" id="CHEBI:15378"/>
        <dbReference type="ChEBI" id="CHEBI:17499"/>
        <dbReference type="ChEBI" id="CHEBI:29950"/>
        <dbReference type="ChEBI" id="CHEBI:30616"/>
        <dbReference type="ChEBI" id="CHEBI:33019"/>
        <dbReference type="ChEBI" id="CHEBI:61963"/>
        <dbReference type="ChEBI" id="CHEBI:65315"/>
        <dbReference type="ChEBI" id="CHEBI:87170"/>
        <dbReference type="ChEBI" id="CHEBI:456215"/>
        <dbReference type="EC" id="2.8.1.13"/>
    </reaction>
</comment>
<comment type="subcellular location">
    <subcellularLocation>
        <location evidence="1">Cytoplasm</location>
    </subcellularLocation>
</comment>
<comment type="similarity">
    <text evidence="1">Belongs to the MnmA/TRMU family.</text>
</comment>
<comment type="sequence caution" evidence="2">
    <conflict type="erroneous initiation">
        <sequence resource="EMBL-CDS" id="AAP11304"/>
    </conflict>
</comment>
<organism>
    <name type="scientific">Bacillus cereus (strain ATCC 14579 / DSM 31 / CCUG 7414 / JCM 2152 / NBRC 15305 / NCIMB 9373 / NCTC 2599 / NRRL B-3711)</name>
    <dbReference type="NCBI Taxonomy" id="226900"/>
    <lineage>
        <taxon>Bacteria</taxon>
        <taxon>Bacillati</taxon>
        <taxon>Bacillota</taxon>
        <taxon>Bacilli</taxon>
        <taxon>Bacillales</taxon>
        <taxon>Bacillaceae</taxon>
        <taxon>Bacillus</taxon>
        <taxon>Bacillus cereus group</taxon>
    </lineage>
</organism>
<protein>
    <recommendedName>
        <fullName evidence="1">tRNA-specific 2-thiouridylase MnmA</fullName>
        <ecNumber evidence="1">2.8.1.13</ecNumber>
    </recommendedName>
</protein>
<dbReference type="EC" id="2.8.1.13" evidence="1"/>
<dbReference type="EMBL" id="AE016877">
    <property type="protein sequence ID" value="AAP11304.1"/>
    <property type="status" value="ALT_INIT"/>
    <property type="molecule type" value="Genomic_DNA"/>
</dbReference>
<dbReference type="RefSeq" id="NP_834103.1">
    <property type="nucleotide sequence ID" value="NC_004722.1"/>
</dbReference>
<dbReference type="RefSeq" id="WP_001038010.1">
    <property type="nucleotide sequence ID" value="NZ_CP138336.1"/>
</dbReference>
<dbReference type="SMR" id="Q812R6"/>
<dbReference type="STRING" id="226900.BC_4391"/>
<dbReference type="GeneID" id="67468693"/>
<dbReference type="KEGG" id="bce:BC4391"/>
<dbReference type="PATRIC" id="fig|226900.8.peg.4541"/>
<dbReference type="HOGENOM" id="CLU_035188_1_0_9"/>
<dbReference type="OrthoDB" id="9800696at2"/>
<dbReference type="Proteomes" id="UP000001417">
    <property type="component" value="Chromosome"/>
</dbReference>
<dbReference type="GO" id="GO:0005737">
    <property type="term" value="C:cytoplasm"/>
    <property type="evidence" value="ECO:0007669"/>
    <property type="project" value="UniProtKB-SubCell"/>
</dbReference>
<dbReference type="GO" id="GO:0005524">
    <property type="term" value="F:ATP binding"/>
    <property type="evidence" value="ECO:0007669"/>
    <property type="project" value="UniProtKB-KW"/>
</dbReference>
<dbReference type="GO" id="GO:0000049">
    <property type="term" value="F:tRNA binding"/>
    <property type="evidence" value="ECO:0007669"/>
    <property type="project" value="UniProtKB-KW"/>
</dbReference>
<dbReference type="GO" id="GO:0103016">
    <property type="term" value="F:tRNA-uridine 2-sulfurtransferase activity"/>
    <property type="evidence" value="ECO:0007669"/>
    <property type="project" value="UniProtKB-EC"/>
</dbReference>
<dbReference type="GO" id="GO:0002143">
    <property type="term" value="P:tRNA wobble position uridine thiolation"/>
    <property type="evidence" value="ECO:0000318"/>
    <property type="project" value="GO_Central"/>
</dbReference>
<dbReference type="CDD" id="cd01998">
    <property type="entry name" value="MnmA_TRMU-like"/>
    <property type="match status" value="1"/>
</dbReference>
<dbReference type="FunFam" id="2.30.30.280:FF:000001">
    <property type="entry name" value="tRNA-specific 2-thiouridylase MnmA"/>
    <property type="match status" value="1"/>
</dbReference>
<dbReference type="FunFam" id="2.40.30.10:FF:000023">
    <property type="entry name" value="tRNA-specific 2-thiouridylase MnmA"/>
    <property type="match status" value="1"/>
</dbReference>
<dbReference type="FunFam" id="3.40.50.620:FF:000004">
    <property type="entry name" value="tRNA-specific 2-thiouridylase MnmA"/>
    <property type="match status" value="1"/>
</dbReference>
<dbReference type="Gene3D" id="2.30.30.280">
    <property type="entry name" value="Adenine nucleotide alpha hydrolases-like domains"/>
    <property type="match status" value="1"/>
</dbReference>
<dbReference type="Gene3D" id="3.40.50.620">
    <property type="entry name" value="HUPs"/>
    <property type="match status" value="1"/>
</dbReference>
<dbReference type="Gene3D" id="2.40.30.10">
    <property type="entry name" value="Translation factors"/>
    <property type="match status" value="1"/>
</dbReference>
<dbReference type="HAMAP" id="MF_00144">
    <property type="entry name" value="tRNA_thiouridyl_MnmA"/>
    <property type="match status" value="1"/>
</dbReference>
<dbReference type="InterPro" id="IPR004506">
    <property type="entry name" value="MnmA-like"/>
</dbReference>
<dbReference type="InterPro" id="IPR046885">
    <property type="entry name" value="MnmA-like_C"/>
</dbReference>
<dbReference type="InterPro" id="IPR046884">
    <property type="entry name" value="MnmA-like_central"/>
</dbReference>
<dbReference type="InterPro" id="IPR023382">
    <property type="entry name" value="MnmA-like_central_sf"/>
</dbReference>
<dbReference type="InterPro" id="IPR014729">
    <property type="entry name" value="Rossmann-like_a/b/a_fold"/>
</dbReference>
<dbReference type="NCBIfam" id="NF001138">
    <property type="entry name" value="PRK00143.1"/>
    <property type="match status" value="1"/>
</dbReference>
<dbReference type="NCBIfam" id="TIGR00420">
    <property type="entry name" value="trmU"/>
    <property type="match status" value="1"/>
</dbReference>
<dbReference type="PANTHER" id="PTHR11933:SF5">
    <property type="entry name" value="MITOCHONDRIAL TRNA-SPECIFIC 2-THIOURIDYLASE 1"/>
    <property type="match status" value="1"/>
</dbReference>
<dbReference type="PANTHER" id="PTHR11933">
    <property type="entry name" value="TRNA 5-METHYLAMINOMETHYL-2-THIOURIDYLATE -METHYLTRANSFERASE"/>
    <property type="match status" value="1"/>
</dbReference>
<dbReference type="Pfam" id="PF03054">
    <property type="entry name" value="tRNA_Me_trans"/>
    <property type="match status" value="1"/>
</dbReference>
<dbReference type="Pfam" id="PF20258">
    <property type="entry name" value="tRNA_Me_trans_C"/>
    <property type="match status" value="1"/>
</dbReference>
<dbReference type="Pfam" id="PF20259">
    <property type="entry name" value="tRNA_Me_trans_M"/>
    <property type="match status" value="1"/>
</dbReference>
<dbReference type="SUPFAM" id="SSF52402">
    <property type="entry name" value="Adenine nucleotide alpha hydrolases-like"/>
    <property type="match status" value="1"/>
</dbReference>
<gene>
    <name evidence="1" type="primary">mnmA</name>
    <name type="synonym">trmU</name>
    <name type="ordered locus">BC_4391</name>
</gene>
<feature type="chain" id="PRO_0000121604" description="tRNA-specific 2-thiouridylase MnmA">
    <location>
        <begin position="1"/>
        <end position="371"/>
    </location>
</feature>
<feature type="region of interest" description="Interaction with target base in tRNA" evidence="1">
    <location>
        <begin position="99"/>
        <end position="101"/>
    </location>
</feature>
<feature type="region of interest" description="Interaction with tRNA" evidence="1">
    <location>
        <begin position="150"/>
        <end position="152"/>
    </location>
</feature>
<feature type="region of interest" description="Interaction with tRNA" evidence="1">
    <location>
        <begin position="308"/>
        <end position="309"/>
    </location>
</feature>
<feature type="active site" description="Nucleophile" evidence="1">
    <location>
        <position position="104"/>
    </location>
</feature>
<feature type="active site" description="Cysteine persulfide intermediate" evidence="1">
    <location>
        <position position="200"/>
    </location>
</feature>
<feature type="binding site" evidence="1">
    <location>
        <begin position="13"/>
        <end position="20"/>
    </location>
    <ligand>
        <name>ATP</name>
        <dbReference type="ChEBI" id="CHEBI:30616"/>
    </ligand>
</feature>
<feature type="binding site" evidence="1">
    <location>
        <position position="39"/>
    </location>
    <ligand>
        <name>ATP</name>
        <dbReference type="ChEBI" id="CHEBI:30616"/>
    </ligand>
</feature>
<feature type="binding site" evidence="1">
    <location>
        <position position="128"/>
    </location>
    <ligand>
        <name>ATP</name>
        <dbReference type="ChEBI" id="CHEBI:30616"/>
    </ligand>
</feature>
<feature type="site" description="Interaction with tRNA" evidence="1">
    <location>
        <position position="129"/>
    </location>
</feature>
<feature type="site" description="Interaction with tRNA" evidence="1">
    <location>
        <position position="341"/>
    </location>
</feature>
<feature type="disulfide bond" description="Alternate" evidence="1">
    <location>
        <begin position="104"/>
        <end position="200"/>
    </location>
</feature>
<reference key="1">
    <citation type="journal article" date="2003" name="Nature">
        <title>Genome sequence of Bacillus cereus and comparative analysis with Bacillus anthracis.</title>
        <authorList>
            <person name="Ivanova N."/>
            <person name="Sorokin A."/>
            <person name="Anderson I."/>
            <person name="Galleron N."/>
            <person name="Candelon B."/>
            <person name="Kapatral V."/>
            <person name="Bhattacharyya A."/>
            <person name="Reznik G."/>
            <person name="Mikhailova N."/>
            <person name="Lapidus A."/>
            <person name="Chu L."/>
            <person name="Mazur M."/>
            <person name="Goltsman E."/>
            <person name="Larsen N."/>
            <person name="D'Souza M."/>
            <person name="Walunas T."/>
            <person name="Grechkin Y."/>
            <person name="Pusch G."/>
            <person name="Haselkorn R."/>
            <person name="Fonstein M."/>
            <person name="Ehrlich S.D."/>
            <person name="Overbeek R."/>
            <person name="Kyrpides N.C."/>
        </authorList>
    </citation>
    <scope>NUCLEOTIDE SEQUENCE [LARGE SCALE GENOMIC DNA]</scope>
    <source>
        <strain>ATCC 14579 / DSM 31 / CCUG 7414 / JCM 2152 / NBRC 15305 / NCIMB 9373 / NCTC 2599 / NRRL B-3711</strain>
    </source>
</reference>
<name>MNMA_BACCR</name>
<accession>Q812R6</accession>